<keyword id="KW-1185">Reference proteome</keyword>
<accession>Q9ZUB9</accession>
<gene>
    <name type="ordered locus">At1g23770</name>
    <name type="ORF">F5O8.32</name>
</gene>
<organism>
    <name type="scientific">Arabidopsis thaliana</name>
    <name type="common">Mouse-ear cress</name>
    <dbReference type="NCBI Taxonomy" id="3702"/>
    <lineage>
        <taxon>Eukaryota</taxon>
        <taxon>Viridiplantae</taxon>
        <taxon>Streptophyta</taxon>
        <taxon>Embryophyta</taxon>
        <taxon>Tracheophyta</taxon>
        <taxon>Spermatophyta</taxon>
        <taxon>Magnoliopsida</taxon>
        <taxon>eudicotyledons</taxon>
        <taxon>Gunneridae</taxon>
        <taxon>Pentapetalae</taxon>
        <taxon>rosids</taxon>
        <taxon>malvids</taxon>
        <taxon>Brassicales</taxon>
        <taxon>Brassicaceae</taxon>
        <taxon>Camelineae</taxon>
        <taxon>Arabidopsis</taxon>
    </lineage>
</organism>
<dbReference type="EMBL" id="AC005990">
    <property type="protein sequence ID" value="AAC98032.1"/>
    <property type="molecule type" value="Genomic_DNA"/>
</dbReference>
<dbReference type="EMBL" id="CP002684">
    <property type="protein sequence ID" value="AEE30430.1"/>
    <property type="molecule type" value="Genomic_DNA"/>
</dbReference>
<dbReference type="PIR" id="H86371">
    <property type="entry name" value="H86371"/>
</dbReference>
<dbReference type="RefSeq" id="NP_173789.1">
    <property type="nucleotide sequence ID" value="NM_102225.1"/>
</dbReference>
<dbReference type="SMR" id="Q9ZUB9"/>
<dbReference type="BioGRID" id="24226">
    <property type="interactions" value="4"/>
</dbReference>
<dbReference type="FunCoup" id="Q9ZUB9">
    <property type="interactions" value="1775"/>
</dbReference>
<dbReference type="PaxDb" id="3702-AT1G23770.1"/>
<dbReference type="DNASU" id="838988"/>
<dbReference type="EnsemblPlants" id="AT1G23770.1">
    <property type="protein sequence ID" value="AT1G23770.1"/>
    <property type="gene ID" value="AT1G23770"/>
</dbReference>
<dbReference type="GeneID" id="838988"/>
<dbReference type="Gramene" id="AT1G23770.1">
    <property type="protein sequence ID" value="AT1G23770.1"/>
    <property type="gene ID" value="AT1G23770"/>
</dbReference>
<dbReference type="KEGG" id="ath:AT1G23770"/>
<dbReference type="Araport" id="AT1G23770"/>
<dbReference type="TAIR" id="AT1G23770"/>
<dbReference type="eggNOG" id="ENOG502QTNJ">
    <property type="taxonomic scope" value="Eukaryota"/>
</dbReference>
<dbReference type="HOGENOM" id="CLU_870406_0_0_1"/>
<dbReference type="InParanoid" id="Q9ZUB9"/>
<dbReference type="OMA" id="GCMVKRV"/>
<dbReference type="PhylomeDB" id="Q9ZUB9"/>
<dbReference type="PRO" id="PR:Q9ZUB9"/>
<dbReference type="Proteomes" id="UP000006548">
    <property type="component" value="Chromosome 1"/>
</dbReference>
<dbReference type="ExpressionAtlas" id="Q9ZUB9">
    <property type="expression patterns" value="baseline and differential"/>
</dbReference>
<dbReference type="Gene3D" id="1.20.1280.50">
    <property type="match status" value="1"/>
</dbReference>
<dbReference type="Gene3D" id="3.40.1000.30">
    <property type="match status" value="1"/>
</dbReference>
<dbReference type="InterPro" id="IPR036047">
    <property type="entry name" value="F-box-like_dom_sf"/>
</dbReference>
<dbReference type="InterPro" id="IPR001810">
    <property type="entry name" value="F-box_dom"/>
</dbReference>
<dbReference type="PANTHER" id="PTHR47602">
    <property type="entry name" value="F-BOX PROTEIN SKIP22"/>
    <property type="match status" value="1"/>
</dbReference>
<dbReference type="PANTHER" id="PTHR47602:SF2">
    <property type="entry name" value="F-BOX PROTEIN SKIP22"/>
    <property type="match status" value="1"/>
</dbReference>
<dbReference type="Pfam" id="PF12937">
    <property type="entry name" value="F-box-like"/>
    <property type="match status" value="1"/>
</dbReference>
<dbReference type="SMART" id="SM00256">
    <property type="entry name" value="FBOX"/>
    <property type="match status" value="1"/>
</dbReference>
<dbReference type="SUPFAM" id="SSF81383">
    <property type="entry name" value="F-box domain"/>
    <property type="match status" value="1"/>
</dbReference>
<dbReference type="PROSITE" id="PS50181">
    <property type="entry name" value="FBOX"/>
    <property type="match status" value="1"/>
</dbReference>
<proteinExistence type="predicted"/>
<sequence length="350" mass="39953">MDTGFADSNNDSSPGEGSKRGNSGIEGPVPMDVELAAAKSKRLSEPFFLKNVLLEKSGDTSDLTALALSVHAVMLESGFVLLDHGSDKFSFSKKLLSVSLRYTLPELITRKDTNTVESVTVRFQNIGPRLVVYGTLGGSCKRVHMTSLDKSRFLPVIDLVVDTLKFEKQGSSSYYREVFMLWRMVKDELVIPLLIGLCDKAGLESPPCLMLLPTELKLKILELLPGVSIGYMACVCTEMRYLASDNDLWEHKCLEEGKGCLWKLYTGDVDWKRKFASFWRRKRLDLLARRNPPIKKSNPRFPTLFPDRRDRREPFDRFGPSDFYRFGLRDPRDRFGPRDPRDPHFYGFRY</sequence>
<protein>
    <recommendedName>
        <fullName>Putative F-box protein At1g23770</fullName>
    </recommendedName>
</protein>
<reference key="1">
    <citation type="journal article" date="2000" name="Nature">
        <title>Sequence and analysis of chromosome 1 of the plant Arabidopsis thaliana.</title>
        <authorList>
            <person name="Theologis A."/>
            <person name="Ecker J.R."/>
            <person name="Palm C.J."/>
            <person name="Federspiel N.A."/>
            <person name="Kaul S."/>
            <person name="White O."/>
            <person name="Alonso J."/>
            <person name="Altafi H."/>
            <person name="Araujo R."/>
            <person name="Bowman C.L."/>
            <person name="Brooks S.Y."/>
            <person name="Buehler E."/>
            <person name="Chan A."/>
            <person name="Chao Q."/>
            <person name="Chen H."/>
            <person name="Cheuk R.F."/>
            <person name="Chin C.W."/>
            <person name="Chung M.K."/>
            <person name="Conn L."/>
            <person name="Conway A.B."/>
            <person name="Conway A.R."/>
            <person name="Creasy T.H."/>
            <person name="Dewar K."/>
            <person name="Dunn P."/>
            <person name="Etgu P."/>
            <person name="Feldblyum T.V."/>
            <person name="Feng J.-D."/>
            <person name="Fong B."/>
            <person name="Fujii C.Y."/>
            <person name="Gill J.E."/>
            <person name="Goldsmith A.D."/>
            <person name="Haas B."/>
            <person name="Hansen N.F."/>
            <person name="Hughes B."/>
            <person name="Huizar L."/>
            <person name="Hunter J.L."/>
            <person name="Jenkins J."/>
            <person name="Johnson-Hopson C."/>
            <person name="Khan S."/>
            <person name="Khaykin E."/>
            <person name="Kim C.J."/>
            <person name="Koo H.L."/>
            <person name="Kremenetskaia I."/>
            <person name="Kurtz D.B."/>
            <person name="Kwan A."/>
            <person name="Lam B."/>
            <person name="Langin-Hooper S."/>
            <person name="Lee A."/>
            <person name="Lee J.M."/>
            <person name="Lenz C.A."/>
            <person name="Li J.H."/>
            <person name="Li Y.-P."/>
            <person name="Lin X."/>
            <person name="Liu S.X."/>
            <person name="Liu Z.A."/>
            <person name="Luros J.S."/>
            <person name="Maiti R."/>
            <person name="Marziali A."/>
            <person name="Militscher J."/>
            <person name="Miranda M."/>
            <person name="Nguyen M."/>
            <person name="Nierman W.C."/>
            <person name="Osborne B.I."/>
            <person name="Pai G."/>
            <person name="Peterson J."/>
            <person name="Pham P.K."/>
            <person name="Rizzo M."/>
            <person name="Rooney T."/>
            <person name="Rowley D."/>
            <person name="Sakano H."/>
            <person name="Salzberg S.L."/>
            <person name="Schwartz J.R."/>
            <person name="Shinn P."/>
            <person name="Southwick A.M."/>
            <person name="Sun H."/>
            <person name="Tallon L.J."/>
            <person name="Tambunga G."/>
            <person name="Toriumi M.J."/>
            <person name="Town C.D."/>
            <person name="Utterback T."/>
            <person name="Van Aken S."/>
            <person name="Vaysberg M."/>
            <person name="Vysotskaia V.S."/>
            <person name="Walker M."/>
            <person name="Wu D."/>
            <person name="Yu G."/>
            <person name="Fraser C.M."/>
            <person name="Venter J.C."/>
            <person name="Davis R.W."/>
        </authorList>
    </citation>
    <scope>NUCLEOTIDE SEQUENCE [LARGE SCALE GENOMIC DNA]</scope>
    <source>
        <strain>cv. Columbia</strain>
    </source>
</reference>
<reference key="2">
    <citation type="journal article" date="2017" name="Plant J.">
        <title>Araport11: a complete reannotation of the Arabidopsis thaliana reference genome.</title>
        <authorList>
            <person name="Cheng C.Y."/>
            <person name="Krishnakumar V."/>
            <person name="Chan A.P."/>
            <person name="Thibaud-Nissen F."/>
            <person name="Schobel S."/>
            <person name="Town C.D."/>
        </authorList>
    </citation>
    <scope>GENOME REANNOTATION</scope>
    <source>
        <strain>cv. Columbia</strain>
    </source>
</reference>
<name>FB17_ARATH</name>
<evidence type="ECO:0000255" key="1">
    <source>
        <dbReference type="PROSITE-ProRule" id="PRU00080"/>
    </source>
</evidence>
<evidence type="ECO:0000256" key="2">
    <source>
        <dbReference type="SAM" id="MobiDB-lite"/>
    </source>
</evidence>
<feature type="chain" id="PRO_0000283295" description="Putative F-box protein At1g23770">
    <location>
        <begin position="1"/>
        <end position="350"/>
    </location>
</feature>
<feature type="domain" description="F-box" evidence="1">
    <location>
        <begin position="206"/>
        <end position="252"/>
    </location>
</feature>
<feature type="region of interest" description="Disordered" evidence="2">
    <location>
        <begin position="1"/>
        <end position="29"/>
    </location>
</feature>
<feature type="compositionally biased region" description="Polar residues" evidence="2">
    <location>
        <begin position="1"/>
        <end position="15"/>
    </location>
</feature>